<accession>B2TX02</accession>
<dbReference type="EC" id="6.1.1.17" evidence="1"/>
<dbReference type="EMBL" id="CP001063">
    <property type="protein sequence ID" value="ACD07777.1"/>
    <property type="molecule type" value="Genomic_DNA"/>
</dbReference>
<dbReference type="RefSeq" id="WP_000695657.1">
    <property type="nucleotide sequence ID" value="NC_010658.1"/>
</dbReference>
<dbReference type="SMR" id="B2TX02"/>
<dbReference type="STRING" id="344609.SbBS512_E2779"/>
<dbReference type="KEGG" id="sbc:SbBS512_E2779"/>
<dbReference type="HOGENOM" id="CLU_015768_6_0_6"/>
<dbReference type="Proteomes" id="UP000001030">
    <property type="component" value="Chromosome"/>
</dbReference>
<dbReference type="GO" id="GO:0005829">
    <property type="term" value="C:cytosol"/>
    <property type="evidence" value="ECO:0007669"/>
    <property type="project" value="TreeGrafter"/>
</dbReference>
<dbReference type="GO" id="GO:0005524">
    <property type="term" value="F:ATP binding"/>
    <property type="evidence" value="ECO:0007669"/>
    <property type="project" value="UniProtKB-UniRule"/>
</dbReference>
<dbReference type="GO" id="GO:0004818">
    <property type="term" value="F:glutamate-tRNA ligase activity"/>
    <property type="evidence" value="ECO:0007669"/>
    <property type="project" value="UniProtKB-UniRule"/>
</dbReference>
<dbReference type="GO" id="GO:0000049">
    <property type="term" value="F:tRNA binding"/>
    <property type="evidence" value="ECO:0007669"/>
    <property type="project" value="InterPro"/>
</dbReference>
<dbReference type="GO" id="GO:0008270">
    <property type="term" value="F:zinc ion binding"/>
    <property type="evidence" value="ECO:0007669"/>
    <property type="project" value="UniProtKB-UniRule"/>
</dbReference>
<dbReference type="GO" id="GO:0006424">
    <property type="term" value="P:glutamyl-tRNA aminoacylation"/>
    <property type="evidence" value="ECO:0007669"/>
    <property type="project" value="UniProtKB-UniRule"/>
</dbReference>
<dbReference type="CDD" id="cd00808">
    <property type="entry name" value="GluRS_core"/>
    <property type="match status" value="1"/>
</dbReference>
<dbReference type="FunFam" id="1.10.10.350:FF:000001">
    <property type="entry name" value="Glutamate--tRNA ligase"/>
    <property type="match status" value="1"/>
</dbReference>
<dbReference type="FunFam" id="3.40.50.620:FF:000007">
    <property type="entry name" value="Glutamate--tRNA ligase"/>
    <property type="match status" value="1"/>
</dbReference>
<dbReference type="Gene3D" id="1.10.10.350">
    <property type="match status" value="1"/>
</dbReference>
<dbReference type="Gene3D" id="3.40.50.620">
    <property type="entry name" value="HUPs"/>
    <property type="match status" value="1"/>
</dbReference>
<dbReference type="HAMAP" id="MF_00022">
    <property type="entry name" value="Glu_tRNA_synth_type1"/>
    <property type="match status" value="1"/>
</dbReference>
<dbReference type="InterPro" id="IPR045462">
    <property type="entry name" value="aa-tRNA-synth_I_cd-bd"/>
</dbReference>
<dbReference type="InterPro" id="IPR020751">
    <property type="entry name" value="aa-tRNA-synth_I_codon-bd_sub2"/>
</dbReference>
<dbReference type="InterPro" id="IPR001412">
    <property type="entry name" value="aa-tRNA-synth_I_CS"/>
</dbReference>
<dbReference type="InterPro" id="IPR008925">
    <property type="entry name" value="aa_tRNA-synth_I_cd-bd_sf"/>
</dbReference>
<dbReference type="InterPro" id="IPR004527">
    <property type="entry name" value="Glu-tRNA-ligase_bac/mito"/>
</dbReference>
<dbReference type="InterPro" id="IPR000924">
    <property type="entry name" value="Glu/Gln-tRNA-synth"/>
</dbReference>
<dbReference type="InterPro" id="IPR020058">
    <property type="entry name" value="Glu/Gln-tRNA-synth_Ib_cat-dom"/>
</dbReference>
<dbReference type="InterPro" id="IPR049940">
    <property type="entry name" value="GluQ/Sye"/>
</dbReference>
<dbReference type="InterPro" id="IPR033910">
    <property type="entry name" value="GluRS_core"/>
</dbReference>
<dbReference type="InterPro" id="IPR014729">
    <property type="entry name" value="Rossmann-like_a/b/a_fold"/>
</dbReference>
<dbReference type="NCBIfam" id="TIGR00464">
    <property type="entry name" value="gltX_bact"/>
    <property type="match status" value="1"/>
</dbReference>
<dbReference type="PANTHER" id="PTHR43311">
    <property type="entry name" value="GLUTAMATE--TRNA LIGASE"/>
    <property type="match status" value="1"/>
</dbReference>
<dbReference type="PANTHER" id="PTHR43311:SF2">
    <property type="entry name" value="GLUTAMATE--TRNA LIGASE, MITOCHONDRIAL-RELATED"/>
    <property type="match status" value="1"/>
</dbReference>
<dbReference type="Pfam" id="PF19269">
    <property type="entry name" value="Anticodon_2"/>
    <property type="match status" value="1"/>
</dbReference>
<dbReference type="Pfam" id="PF00749">
    <property type="entry name" value="tRNA-synt_1c"/>
    <property type="match status" value="1"/>
</dbReference>
<dbReference type="PRINTS" id="PR00987">
    <property type="entry name" value="TRNASYNTHGLU"/>
</dbReference>
<dbReference type="SUPFAM" id="SSF48163">
    <property type="entry name" value="An anticodon-binding domain of class I aminoacyl-tRNA synthetases"/>
    <property type="match status" value="1"/>
</dbReference>
<dbReference type="SUPFAM" id="SSF52374">
    <property type="entry name" value="Nucleotidylyl transferase"/>
    <property type="match status" value="1"/>
</dbReference>
<dbReference type="PROSITE" id="PS00178">
    <property type="entry name" value="AA_TRNA_LIGASE_I"/>
    <property type="match status" value="1"/>
</dbReference>
<gene>
    <name evidence="1" type="primary">gltX</name>
    <name type="ordered locus">SbBS512_E2779</name>
</gene>
<feature type="chain" id="PRO_1000090108" description="Glutamate--tRNA ligase">
    <location>
        <begin position="1"/>
        <end position="471"/>
    </location>
</feature>
<feature type="short sequence motif" description="'HIGH' region" evidence="1">
    <location>
        <begin position="9"/>
        <end position="19"/>
    </location>
</feature>
<feature type="short sequence motif" description="'KMSKS' region" evidence="1">
    <location>
        <begin position="237"/>
        <end position="241"/>
    </location>
</feature>
<feature type="binding site" evidence="1">
    <location>
        <position position="98"/>
    </location>
    <ligand>
        <name>Zn(2+)</name>
        <dbReference type="ChEBI" id="CHEBI:29105"/>
    </ligand>
</feature>
<feature type="binding site" evidence="1">
    <location>
        <position position="100"/>
    </location>
    <ligand>
        <name>Zn(2+)</name>
        <dbReference type="ChEBI" id="CHEBI:29105"/>
    </ligand>
</feature>
<feature type="binding site" evidence="1">
    <location>
        <position position="125"/>
    </location>
    <ligand>
        <name>Zn(2+)</name>
        <dbReference type="ChEBI" id="CHEBI:29105"/>
    </ligand>
</feature>
<feature type="binding site" evidence="1">
    <location>
        <position position="127"/>
    </location>
    <ligand>
        <name>Zn(2+)</name>
        <dbReference type="ChEBI" id="CHEBI:29105"/>
    </ligand>
</feature>
<feature type="binding site" evidence="1">
    <location>
        <position position="240"/>
    </location>
    <ligand>
        <name>ATP</name>
        <dbReference type="ChEBI" id="CHEBI:30616"/>
    </ligand>
</feature>
<reference key="1">
    <citation type="submission" date="2008-05" db="EMBL/GenBank/DDBJ databases">
        <title>Complete sequence of Shigella boydii serotype 18 strain BS512.</title>
        <authorList>
            <person name="Rasko D.A."/>
            <person name="Rosovitz M."/>
            <person name="Maurelli A.T."/>
            <person name="Myers G."/>
            <person name="Seshadri R."/>
            <person name="Cer R."/>
            <person name="Jiang L."/>
            <person name="Ravel J."/>
            <person name="Sebastian Y."/>
        </authorList>
    </citation>
    <scope>NUCLEOTIDE SEQUENCE [LARGE SCALE GENOMIC DNA]</scope>
    <source>
        <strain>CDC 3083-94 / BS512</strain>
    </source>
</reference>
<evidence type="ECO:0000255" key="1">
    <source>
        <dbReference type="HAMAP-Rule" id="MF_00022"/>
    </source>
</evidence>
<organism>
    <name type="scientific">Shigella boydii serotype 18 (strain CDC 3083-94 / BS512)</name>
    <dbReference type="NCBI Taxonomy" id="344609"/>
    <lineage>
        <taxon>Bacteria</taxon>
        <taxon>Pseudomonadati</taxon>
        <taxon>Pseudomonadota</taxon>
        <taxon>Gammaproteobacteria</taxon>
        <taxon>Enterobacterales</taxon>
        <taxon>Enterobacteriaceae</taxon>
        <taxon>Shigella</taxon>
    </lineage>
</organism>
<keyword id="KW-0030">Aminoacyl-tRNA synthetase</keyword>
<keyword id="KW-0067">ATP-binding</keyword>
<keyword id="KW-0963">Cytoplasm</keyword>
<keyword id="KW-0436">Ligase</keyword>
<keyword id="KW-0479">Metal-binding</keyword>
<keyword id="KW-0547">Nucleotide-binding</keyword>
<keyword id="KW-0648">Protein biosynthesis</keyword>
<keyword id="KW-1185">Reference proteome</keyword>
<keyword id="KW-0862">Zinc</keyword>
<name>SYE_SHIB3</name>
<comment type="function">
    <text evidence="1">Catalyzes the attachment of glutamate to tRNA(Glu) in a two-step reaction: glutamate is first activated by ATP to form Glu-AMP and then transferred to the acceptor end of tRNA(Glu).</text>
</comment>
<comment type="catalytic activity">
    <reaction evidence="1">
        <text>tRNA(Glu) + L-glutamate + ATP = L-glutamyl-tRNA(Glu) + AMP + diphosphate</text>
        <dbReference type="Rhea" id="RHEA:23540"/>
        <dbReference type="Rhea" id="RHEA-COMP:9663"/>
        <dbReference type="Rhea" id="RHEA-COMP:9680"/>
        <dbReference type="ChEBI" id="CHEBI:29985"/>
        <dbReference type="ChEBI" id="CHEBI:30616"/>
        <dbReference type="ChEBI" id="CHEBI:33019"/>
        <dbReference type="ChEBI" id="CHEBI:78442"/>
        <dbReference type="ChEBI" id="CHEBI:78520"/>
        <dbReference type="ChEBI" id="CHEBI:456215"/>
        <dbReference type="EC" id="6.1.1.17"/>
    </reaction>
</comment>
<comment type="cofactor">
    <cofactor evidence="1">
        <name>Zn(2+)</name>
        <dbReference type="ChEBI" id="CHEBI:29105"/>
    </cofactor>
    <text evidence="1">Binds 1 zinc ion per subunit.</text>
</comment>
<comment type="subunit">
    <text evidence="1">Monomer.</text>
</comment>
<comment type="subcellular location">
    <subcellularLocation>
        <location evidence="1">Cytoplasm</location>
    </subcellularLocation>
</comment>
<comment type="similarity">
    <text evidence="1">Belongs to the class-I aminoacyl-tRNA synthetase family. Glutamate--tRNA ligase type 1 subfamily.</text>
</comment>
<protein>
    <recommendedName>
        <fullName evidence="1">Glutamate--tRNA ligase</fullName>
        <ecNumber evidence="1">6.1.1.17</ecNumber>
    </recommendedName>
    <alternativeName>
        <fullName evidence="1">Glutamyl-tRNA synthetase</fullName>
        <shortName evidence="1">GluRS</shortName>
    </alternativeName>
</protein>
<proteinExistence type="inferred from homology"/>
<sequence>MKIKTRFAPSPTGYLHVGGARTALYSWLFARNHGGEFVLRIEDTDLERSTPEAIEAIMDGMNWLSLEWDEGPYYQTKRFDRYNAVIDQMLEEGTAYKCYCSKERLEALREEQMAKGEKPRYDGRCRHSHEHHADDEPCVVRFANPQEGSVVFDDQIRGPIEFSNQELDDLIIRRTDGSPTYNFCVVVDDWDMEITHVIRGEDHINNTPRQINILKALKAPVPVYAHVSMINGDDGKKLSKRHGAVSVMQYRDDGYLPEALLNYLVRLGWSHGDQEIFTREEMIKYFTLNAVSKSASAFNTDKLLWLNHHYINALPPEYVATHLQWHIEQENIDTRNGPQLADLVKLLGERCKTLKEMAQSCRYFYEDFAEFDADAAKKHLRPVARQPLEVVRDKLAAITDWTAENVHHAIQATADELEVGMGKVGMPLRVAVTGAGQSPALDVTVHAIGRTRSIERINKALAFIAERENQQ</sequence>